<gene>
    <name type="primary">bglI</name>
    <name type="ORF">AFLA_057030</name>
</gene>
<sequence length="839" mass="92082">MPRLDVEKTIEELSLGEKVALTAGIDFWHTASVPRLNIPTLRMSDGPNGVRGTRFFNGVPAACFPCATALGATWDTELLHEIGQLMGEESIAKGSHIILGPTINTQRSPLGGRGFESFAEDGVLSGLLAGYISKGIQEKGVAATLKHFVCNDQEHQRMAVDSIVTQRALREIYLLPFQLAMRICRTACVMTAYNKVNGTHVSQNKEIITDILRKEWGWDGLVMSDWFGTYSTSDAINAGLDLEMPGKTRWRGTALAHAVSSNEVAEFVMDERVRNVLNLVNFVDGLNIPENAPEKALNRPQDQALLRRAAAESVVLMKNEEDILPLKKEKSILVIGPNSKVAAYCGGGSASLDAYYTVNPFEGVSAQSKGEVKFSQGVYSHKDLPLLGPLLKTADGKTGFSFKVYNEHPSESNRELIEQLHLVSSSGFLMDYVNPKIKSLTYYVDMEGLFTPEEDGVYDFGVTVVGTGQLFIDGELVVDNTKNQRQGSAFFGSATVEEKGSKELKAGQTYKVLFQFGTAPTSDLDTRGVVVFGPGGFRFGASRRVGQEELISNAVKLASEAEQVVVFAGLTSEWETEGYDRDHMDLPPGSDEMISRVLDVNPNAVVVIQSGTPVTMPWANKTKALLHAWFGGNECGNGIADVLYGDVNPSGKLPITFPVRLQDNPSYVNFRSERGRVLYGEDVYVGYRYYEKVDLAPLFPFGHGLSYTTFTRSDLTLTTTPEKPQYEESGEPITATVTVTNTGKVAGAEIVQLWVAPPATEVNRPVRELKGFTKVFLQPGEQKKVEIVVEKKLATSWFDEMREKWASEKGEYGVLVTGTGEGVLKSSFKVEKTRYWLGL</sequence>
<dbReference type="EC" id="3.2.1.21"/>
<dbReference type="EMBL" id="EQ963477">
    <property type="protein sequence ID" value="EED51440.1"/>
    <property type="status" value="ALT_SEQ"/>
    <property type="molecule type" value="Genomic_DNA"/>
</dbReference>
<dbReference type="RefSeq" id="XP_002378447.1">
    <property type="nucleotide sequence ID" value="XM_002378406.1"/>
</dbReference>
<dbReference type="SMR" id="B8NDE2"/>
<dbReference type="STRING" id="332952.B8NDE2"/>
<dbReference type="GlyCosmos" id="B8NDE2">
    <property type="glycosylation" value="2 sites, No reported glycans"/>
</dbReference>
<dbReference type="VEuPathDB" id="FungiDB:AFLA_004748"/>
<dbReference type="eggNOG" id="ENOG502QR4D">
    <property type="taxonomic scope" value="Eukaryota"/>
</dbReference>
<dbReference type="UniPathway" id="UPA00696"/>
<dbReference type="GO" id="GO:0005576">
    <property type="term" value="C:extracellular region"/>
    <property type="evidence" value="ECO:0007669"/>
    <property type="project" value="UniProtKB-SubCell"/>
</dbReference>
<dbReference type="GO" id="GO:0008422">
    <property type="term" value="F:beta-glucosidase activity"/>
    <property type="evidence" value="ECO:0007669"/>
    <property type="project" value="UniProtKB-EC"/>
</dbReference>
<dbReference type="GO" id="GO:0030245">
    <property type="term" value="P:cellulose catabolic process"/>
    <property type="evidence" value="ECO:0007669"/>
    <property type="project" value="UniProtKB-UniPathway"/>
</dbReference>
<dbReference type="FunFam" id="3.20.20.300:FF:000006">
    <property type="entry name" value="Beta-glucosidase H"/>
    <property type="match status" value="1"/>
</dbReference>
<dbReference type="FunFam" id="2.60.40.10:FF:000495">
    <property type="entry name" value="Periplasmic beta-glucosidase"/>
    <property type="match status" value="1"/>
</dbReference>
<dbReference type="FunFam" id="2.60.120.260:FF:000119">
    <property type="entry name" value="Probable beta-glucosidase I"/>
    <property type="match status" value="1"/>
</dbReference>
<dbReference type="Gene3D" id="2.60.120.260">
    <property type="entry name" value="Galactose-binding domain-like"/>
    <property type="match status" value="1"/>
</dbReference>
<dbReference type="Gene3D" id="3.40.50.1700">
    <property type="entry name" value="Glycoside hydrolase family 3 C-terminal domain"/>
    <property type="match status" value="1"/>
</dbReference>
<dbReference type="Gene3D" id="3.20.20.300">
    <property type="entry name" value="Glycoside hydrolase, family 3, N-terminal domain"/>
    <property type="match status" value="1"/>
</dbReference>
<dbReference type="Gene3D" id="2.60.40.10">
    <property type="entry name" value="Immunoglobulins"/>
    <property type="match status" value="1"/>
</dbReference>
<dbReference type="InterPro" id="IPR050288">
    <property type="entry name" value="Cellulose_deg_GH3"/>
</dbReference>
<dbReference type="InterPro" id="IPR026891">
    <property type="entry name" value="Fn3-like"/>
</dbReference>
<dbReference type="InterPro" id="IPR019800">
    <property type="entry name" value="Glyco_hydro_3_AS"/>
</dbReference>
<dbReference type="InterPro" id="IPR002772">
    <property type="entry name" value="Glyco_hydro_3_C"/>
</dbReference>
<dbReference type="InterPro" id="IPR036881">
    <property type="entry name" value="Glyco_hydro_3_C_sf"/>
</dbReference>
<dbReference type="InterPro" id="IPR001764">
    <property type="entry name" value="Glyco_hydro_3_N"/>
</dbReference>
<dbReference type="InterPro" id="IPR036962">
    <property type="entry name" value="Glyco_hydro_3_N_sf"/>
</dbReference>
<dbReference type="InterPro" id="IPR017853">
    <property type="entry name" value="Glycoside_hydrolase_SF"/>
</dbReference>
<dbReference type="InterPro" id="IPR013783">
    <property type="entry name" value="Ig-like_fold"/>
</dbReference>
<dbReference type="InterPro" id="IPR037524">
    <property type="entry name" value="PA14/GLEYA"/>
</dbReference>
<dbReference type="InterPro" id="IPR011658">
    <property type="entry name" value="PA14_dom"/>
</dbReference>
<dbReference type="PANTHER" id="PTHR42715">
    <property type="entry name" value="BETA-GLUCOSIDASE"/>
    <property type="match status" value="1"/>
</dbReference>
<dbReference type="PANTHER" id="PTHR42715:SF27">
    <property type="entry name" value="BETA-GLUCOSIDASE-RELATED"/>
    <property type="match status" value="1"/>
</dbReference>
<dbReference type="Pfam" id="PF14310">
    <property type="entry name" value="Fn3-like"/>
    <property type="match status" value="1"/>
</dbReference>
<dbReference type="Pfam" id="PF00933">
    <property type="entry name" value="Glyco_hydro_3"/>
    <property type="match status" value="1"/>
</dbReference>
<dbReference type="Pfam" id="PF01915">
    <property type="entry name" value="Glyco_hydro_3_C"/>
    <property type="match status" value="1"/>
</dbReference>
<dbReference type="Pfam" id="PF07691">
    <property type="entry name" value="PA14"/>
    <property type="match status" value="1"/>
</dbReference>
<dbReference type="PRINTS" id="PR00133">
    <property type="entry name" value="GLHYDRLASE3"/>
</dbReference>
<dbReference type="SMART" id="SM01217">
    <property type="entry name" value="Fn3_like"/>
    <property type="match status" value="1"/>
</dbReference>
<dbReference type="SMART" id="SM00758">
    <property type="entry name" value="PA14"/>
    <property type="match status" value="1"/>
</dbReference>
<dbReference type="SUPFAM" id="SSF51445">
    <property type="entry name" value="(Trans)glycosidases"/>
    <property type="match status" value="1"/>
</dbReference>
<dbReference type="SUPFAM" id="SSF52279">
    <property type="entry name" value="Beta-D-glucan exohydrolase, C-terminal domain"/>
    <property type="match status" value="1"/>
</dbReference>
<dbReference type="PROSITE" id="PS00775">
    <property type="entry name" value="GLYCOSYL_HYDROL_F3"/>
    <property type="match status" value="1"/>
</dbReference>
<dbReference type="PROSITE" id="PS51820">
    <property type="entry name" value="PA14"/>
    <property type="match status" value="1"/>
</dbReference>
<evidence type="ECO:0000250" key="1"/>
<evidence type="ECO:0000255" key="2"/>
<evidence type="ECO:0000255" key="3">
    <source>
        <dbReference type="PROSITE-ProRule" id="PRU01164"/>
    </source>
</evidence>
<evidence type="ECO:0000305" key="4"/>
<accession>B8NDE2</accession>
<name>BGLI_ASPFN</name>
<organism>
    <name type="scientific">Aspergillus flavus (strain ATCC 200026 / FGSC A1120 / IAM 13836 / NRRL 3357 / JCM 12722 / SRRC 167)</name>
    <dbReference type="NCBI Taxonomy" id="332952"/>
    <lineage>
        <taxon>Eukaryota</taxon>
        <taxon>Fungi</taxon>
        <taxon>Dikarya</taxon>
        <taxon>Ascomycota</taxon>
        <taxon>Pezizomycotina</taxon>
        <taxon>Eurotiomycetes</taxon>
        <taxon>Eurotiomycetidae</taxon>
        <taxon>Eurotiales</taxon>
        <taxon>Aspergillaceae</taxon>
        <taxon>Aspergillus</taxon>
        <taxon>Aspergillus subgen. Circumdati</taxon>
    </lineage>
</organism>
<keyword id="KW-0119">Carbohydrate metabolism</keyword>
<keyword id="KW-0136">Cellulose degradation</keyword>
<keyword id="KW-0325">Glycoprotein</keyword>
<keyword id="KW-0326">Glycosidase</keyword>
<keyword id="KW-0378">Hydrolase</keyword>
<keyword id="KW-0624">Polysaccharide degradation</keyword>
<keyword id="KW-0964">Secreted</keyword>
<feature type="chain" id="PRO_0000394885" description="Probable beta-glucosidase I">
    <location>
        <begin position="1"/>
        <end position="839"/>
    </location>
</feature>
<feature type="domain" description="PA14" evidence="3">
    <location>
        <begin position="395"/>
        <end position="555"/>
    </location>
</feature>
<feature type="active site" evidence="1">
    <location>
        <position position="225"/>
    </location>
</feature>
<feature type="glycosylation site" description="N-linked (GlcNAc...) asparagine" evidence="2">
    <location>
        <position position="197"/>
    </location>
</feature>
<feature type="glycosylation site" description="N-linked (GlcNAc...) asparagine" evidence="2">
    <location>
        <position position="620"/>
    </location>
</feature>
<protein>
    <recommendedName>
        <fullName>Probable beta-glucosidase I</fullName>
        <ecNumber>3.2.1.21</ecNumber>
    </recommendedName>
    <alternativeName>
        <fullName>Beta-D-glucoside glucohydrolase I</fullName>
    </alternativeName>
    <alternativeName>
        <fullName>Cellobiase I</fullName>
    </alternativeName>
    <alternativeName>
        <fullName>Gentiobiase I</fullName>
    </alternativeName>
</protein>
<proteinExistence type="inferred from homology"/>
<comment type="function">
    <text evidence="1">Beta-glucosidases are one of a number of cellulolytic enzymes involved in the degradation of cellulosic biomass. Catalyzes the last step releasing glucose from the inhibitory cellobiose (By similarity).</text>
</comment>
<comment type="catalytic activity">
    <reaction>
        <text>Hydrolysis of terminal, non-reducing beta-D-glucosyl residues with release of beta-D-glucose.</text>
        <dbReference type="EC" id="3.2.1.21"/>
    </reaction>
</comment>
<comment type="pathway">
    <text>Glycan metabolism; cellulose degradation.</text>
</comment>
<comment type="subcellular location">
    <subcellularLocation>
        <location evidence="1">Secreted</location>
    </subcellularLocation>
</comment>
<comment type="similarity">
    <text evidence="4">Belongs to the glycosyl hydrolase 3 family.</text>
</comment>
<comment type="sequence caution" evidence="4">
    <conflict type="erroneous gene model prediction">
        <sequence resource="EMBL-CDS" id="EED51440"/>
    </conflict>
</comment>
<reference key="1">
    <citation type="journal article" date="2015" name="Genome Announc.">
        <title>Genome sequence of Aspergillus flavus NRRL 3357, a strain that causes aflatoxin contamination of food and feed.</title>
        <authorList>
            <person name="Nierman W.C."/>
            <person name="Yu J."/>
            <person name="Fedorova-Abrams N.D."/>
            <person name="Losada L."/>
            <person name="Cleveland T.E."/>
            <person name="Bhatnagar D."/>
            <person name="Bennett J.W."/>
            <person name="Dean R."/>
            <person name="Payne G.A."/>
        </authorList>
    </citation>
    <scope>NUCLEOTIDE SEQUENCE [LARGE SCALE GENOMIC DNA]</scope>
    <source>
        <strain>ATCC 200026 / FGSC A1120 / IAM 13836 / NRRL 3357 / JCM 12722 / SRRC 167</strain>
    </source>
</reference>